<evidence type="ECO:0000255" key="1">
    <source>
        <dbReference type="HAMAP-Rule" id="MF_01219"/>
    </source>
</evidence>
<proteinExistence type="inferred from homology"/>
<feature type="chain" id="PRO_1000053818" description="Bifunctional protein PyrR">
    <location>
        <begin position="1"/>
        <end position="180"/>
    </location>
</feature>
<feature type="short sequence motif" description="PRPP-binding" evidence="1">
    <location>
        <begin position="101"/>
        <end position="113"/>
    </location>
</feature>
<accession>Q3M8F0</accession>
<reference key="1">
    <citation type="journal article" date="2014" name="Stand. Genomic Sci.">
        <title>Complete genome sequence of Anabaena variabilis ATCC 29413.</title>
        <authorList>
            <person name="Thiel T."/>
            <person name="Pratte B.S."/>
            <person name="Zhong J."/>
            <person name="Goodwin L."/>
            <person name="Copeland A."/>
            <person name="Lucas S."/>
            <person name="Han C."/>
            <person name="Pitluck S."/>
            <person name="Land M.L."/>
            <person name="Kyrpides N.C."/>
            <person name="Woyke T."/>
        </authorList>
    </citation>
    <scope>NUCLEOTIDE SEQUENCE [LARGE SCALE GENOMIC DNA]</scope>
    <source>
        <strain>ATCC 29413 / PCC 7937</strain>
    </source>
</reference>
<gene>
    <name evidence="1" type="primary">pyrR</name>
    <name type="ordered locus">Ava_3128</name>
</gene>
<organism>
    <name type="scientific">Trichormus variabilis (strain ATCC 29413 / PCC 7937)</name>
    <name type="common">Anabaena variabilis</name>
    <dbReference type="NCBI Taxonomy" id="240292"/>
    <lineage>
        <taxon>Bacteria</taxon>
        <taxon>Bacillati</taxon>
        <taxon>Cyanobacteriota</taxon>
        <taxon>Cyanophyceae</taxon>
        <taxon>Nostocales</taxon>
        <taxon>Nostocaceae</taxon>
        <taxon>Trichormus</taxon>
    </lineage>
</organism>
<sequence length="180" mass="19998">MATPVKVVEILSAEDLRRTLTRLASQIVERTRDLSQLVLLGIYTRGVPLAELLARQIETLEGINVGVGALDITFYRDDLDQIGLRTPAKTSITLDLTGKTVVLVDDVIFKGRTIRAALNAVNEYGRPEVIRLAVLVDRGHREVPIHPDFVGKQLPTAKEEVVKVYLQDWDGRDAVELVGY</sequence>
<name>PYRR_TRIV2</name>
<comment type="function">
    <text evidence="1">Regulates the transcription of the pyrimidine nucleotide (pyr) operon in response to exogenous pyrimidines.</text>
</comment>
<comment type="function">
    <text evidence="1">Also displays a weak uracil phosphoribosyltransferase activity which is not physiologically significant.</text>
</comment>
<comment type="catalytic activity">
    <reaction evidence="1">
        <text>UMP + diphosphate = 5-phospho-alpha-D-ribose 1-diphosphate + uracil</text>
        <dbReference type="Rhea" id="RHEA:13017"/>
        <dbReference type="ChEBI" id="CHEBI:17568"/>
        <dbReference type="ChEBI" id="CHEBI:33019"/>
        <dbReference type="ChEBI" id="CHEBI:57865"/>
        <dbReference type="ChEBI" id="CHEBI:58017"/>
        <dbReference type="EC" id="2.4.2.9"/>
    </reaction>
</comment>
<comment type="similarity">
    <text evidence="1">Belongs to the purine/pyrimidine phosphoribosyltransferase family. PyrR subfamily.</text>
</comment>
<keyword id="KW-0328">Glycosyltransferase</keyword>
<keyword id="KW-0804">Transcription</keyword>
<keyword id="KW-0805">Transcription regulation</keyword>
<keyword id="KW-0808">Transferase</keyword>
<protein>
    <recommendedName>
        <fullName evidence="1">Bifunctional protein PyrR</fullName>
    </recommendedName>
    <domain>
        <recommendedName>
            <fullName evidence="1">Pyrimidine operon regulatory protein</fullName>
        </recommendedName>
    </domain>
    <domain>
        <recommendedName>
            <fullName evidence="1">Uracil phosphoribosyltransferase</fullName>
            <shortName evidence="1">UPRTase</shortName>
            <ecNumber evidence="1">2.4.2.9</ecNumber>
        </recommendedName>
    </domain>
</protein>
<dbReference type="EC" id="2.4.2.9" evidence="1"/>
<dbReference type="EMBL" id="CP000117">
    <property type="protein sequence ID" value="ABA22736.1"/>
    <property type="molecule type" value="Genomic_DNA"/>
</dbReference>
<dbReference type="SMR" id="Q3M8F0"/>
<dbReference type="STRING" id="240292.Ava_3128"/>
<dbReference type="KEGG" id="ava:Ava_3128"/>
<dbReference type="eggNOG" id="COG2065">
    <property type="taxonomic scope" value="Bacteria"/>
</dbReference>
<dbReference type="HOGENOM" id="CLU_094234_2_1_3"/>
<dbReference type="Proteomes" id="UP000002533">
    <property type="component" value="Chromosome"/>
</dbReference>
<dbReference type="GO" id="GO:0004845">
    <property type="term" value="F:uracil phosphoribosyltransferase activity"/>
    <property type="evidence" value="ECO:0007669"/>
    <property type="project" value="UniProtKB-UniRule"/>
</dbReference>
<dbReference type="GO" id="GO:0006355">
    <property type="term" value="P:regulation of DNA-templated transcription"/>
    <property type="evidence" value="ECO:0007669"/>
    <property type="project" value="UniProtKB-UniRule"/>
</dbReference>
<dbReference type="CDD" id="cd06223">
    <property type="entry name" value="PRTases_typeI"/>
    <property type="match status" value="1"/>
</dbReference>
<dbReference type="FunFam" id="3.40.50.2020:FF:000020">
    <property type="entry name" value="Bifunctional protein PyrR"/>
    <property type="match status" value="1"/>
</dbReference>
<dbReference type="Gene3D" id="3.40.50.2020">
    <property type="match status" value="1"/>
</dbReference>
<dbReference type="HAMAP" id="MF_01219">
    <property type="entry name" value="PyrR"/>
    <property type="match status" value="1"/>
</dbReference>
<dbReference type="InterPro" id="IPR000836">
    <property type="entry name" value="PRibTrfase_dom"/>
</dbReference>
<dbReference type="InterPro" id="IPR029057">
    <property type="entry name" value="PRTase-like"/>
</dbReference>
<dbReference type="InterPro" id="IPR023050">
    <property type="entry name" value="PyrR"/>
</dbReference>
<dbReference type="InterPro" id="IPR050137">
    <property type="entry name" value="PyrR_bifunctional"/>
</dbReference>
<dbReference type="NCBIfam" id="NF003549">
    <property type="entry name" value="PRK05205.1-5"/>
    <property type="match status" value="1"/>
</dbReference>
<dbReference type="PANTHER" id="PTHR11608">
    <property type="entry name" value="BIFUNCTIONAL PROTEIN PYRR"/>
    <property type="match status" value="1"/>
</dbReference>
<dbReference type="PANTHER" id="PTHR11608:SF0">
    <property type="entry name" value="BIFUNCTIONAL PROTEIN PYRR"/>
    <property type="match status" value="1"/>
</dbReference>
<dbReference type="Pfam" id="PF00156">
    <property type="entry name" value="Pribosyltran"/>
    <property type="match status" value="1"/>
</dbReference>
<dbReference type="SUPFAM" id="SSF53271">
    <property type="entry name" value="PRTase-like"/>
    <property type="match status" value="1"/>
</dbReference>